<accession>Q82XN1</accession>
<proteinExistence type="inferred from homology"/>
<sequence>MTTVKVKENEPFEIAMRRFKRSIEKTGLLTELRAREFYEKPTAVRKRKHAAAVKRTYKRLRSQMLPPKLY</sequence>
<comment type="similarity">
    <text evidence="1">Belongs to the bacterial ribosomal protein bS21 family.</text>
</comment>
<reference key="1">
    <citation type="journal article" date="2003" name="J. Bacteriol.">
        <title>Complete genome sequence of the ammonia-oxidizing bacterium and obligate chemolithoautotroph Nitrosomonas europaea.</title>
        <authorList>
            <person name="Chain P."/>
            <person name="Lamerdin J.E."/>
            <person name="Larimer F.W."/>
            <person name="Regala W."/>
            <person name="Lao V."/>
            <person name="Land M.L."/>
            <person name="Hauser L."/>
            <person name="Hooper A.B."/>
            <person name="Klotz M.G."/>
            <person name="Norton J."/>
            <person name="Sayavedra-Soto L.A."/>
            <person name="Arciero D.M."/>
            <person name="Hommes N.G."/>
            <person name="Whittaker M.M."/>
            <person name="Arp D.J."/>
        </authorList>
    </citation>
    <scope>NUCLEOTIDE SEQUENCE [LARGE SCALE GENOMIC DNA]</scope>
    <source>
        <strain>ATCC 19718 / CIP 103999 / KCTC 2705 / NBRC 14298</strain>
    </source>
</reference>
<keyword id="KW-1185">Reference proteome</keyword>
<keyword id="KW-0687">Ribonucleoprotein</keyword>
<keyword id="KW-0689">Ribosomal protein</keyword>
<feature type="chain" id="PRO_0000266716" description="Small ribosomal subunit protein bS21">
    <location>
        <begin position="1"/>
        <end position="70"/>
    </location>
</feature>
<protein>
    <recommendedName>
        <fullName evidence="1">Small ribosomal subunit protein bS21</fullName>
    </recommendedName>
    <alternativeName>
        <fullName evidence="2">30S ribosomal protein S21</fullName>
    </alternativeName>
</protein>
<evidence type="ECO:0000255" key="1">
    <source>
        <dbReference type="HAMAP-Rule" id="MF_00358"/>
    </source>
</evidence>
<evidence type="ECO:0000305" key="2"/>
<gene>
    <name evidence="1" type="primary">rpsU</name>
    <name type="ordered locus">NE0226</name>
</gene>
<dbReference type="EMBL" id="AL954747">
    <property type="protein sequence ID" value="CAD84137.1"/>
    <property type="molecule type" value="Genomic_DNA"/>
</dbReference>
<dbReference type="RefSeq" id="WP_011110871.1">
    <property type="nucleotide sequence ID" value="NC_004757.1"/>
</dbReference>
<dbReference type="SMR" id="Q82XN1"/>
<dbReference type="STRING" id="228410.NE0226"/>
<dbReference type="DNASU" id="1081153"/>
<dbReference type="GeneID" id="87103433"/>
<dbReference type="KEGG" id="neu:NE0226"/>
<dbReference type="eggNOG" id="COG0828">
    <property type="taxonomic scope" value="Bacteria"/>
</dbReference>
<dbReference type="HOGENOM" id="CLU_159258_1_2_4"/>
<dbReference type="OrthoDB" id="9799244at2"/>
<dbReference type="PhylomeDB" id="Q82XN1"/>
<dbReference type="Proteomes" id="UP000001416">
    <property type="component" value="Chromosome"/>
</dbReference>
<dbReference type="GO" id="GO:1990904">
    <property type="term" value="C:ribonucleoprotein complex"/>
    <property type="evidence" value="ECO:0007669"/>
    <property type="project" value="UniProtKB-KW"/>
</dbReference>
<dbReference type="GO" id="GO:0005840">
    <property type="term" value="C:ribosome"/>
    <property type="evidence" value="ECO:0007669"/>
    <property type="project" value="UniProtKB-KW"/>
</dbReference>
<dbReference type="GO" id="GO:0003735">
    <property type="term" value="F:structural constituent of ribosome"/>
    <property type="evidence" value="ECO:0007669"/>
    <property type="project" value="InterPro"/>
</dbReference>
<dbReference type="GO" id="GO:0006412">
    <property type="term" value="P:translation"/>
    <property type="evidence" value="ECO:0007669"/>
    <property type="project" value="UniProtKB-UniRule"/>
</dbReference>
<dbReference type="Gene3D" id="1.20.5.1150">
    <property type="entry name" value="Ribosomal protein S8"/>
    <property type="match status" value="1"/>
</dbReference>
<dbReference type="HAMAP" id="MF_00358">
    <property type="entry name" value="Ribosomal_bS21"/>
    <property type="match status" value="1"/>
</dbReference>
<dbReference type="InterPro" id="IPR001911">
    <property type="entry name" value="Ribosomal_bS21"/>
</dbReference>
<dbReference type="InterPro" id="IPR038380">
    <property type="entry name" value="Ribosomal_bS21_sf"/>
</dbReference>
<dbReference type="NCBIfam" id="TIGR00030">
    <property type="entry name" value="S21p"/>
    <property type="match status" value="1"/>
</dbReference>
<dbReference type="PANTHER" id="PTHR21109">
    <property type="entry name" value="MITOCHONDRIAL 28S RIBOSOMAL PROTEIN S21"/>
    <property type="match status" value="1"/>
</dbReference>
<dbReference type="PANTHER" id="PTHR21109:SF22">
    <property type="entry name" value="SMALL RIBOSOMAL SUBUNIT PROTEIN BS21"/>
    <property type="match status" value="1"/>
</dbReference>
<dbReference type="Pfam" id="PF01165">
    <property type="entry name" value="Ribosomal_S21"/>
    <property type="match status" value="1"/>
</dbReference>
<dbReference type="PRINTS" id="PR00976">
    <property type="entry name" value="RIBOSOMALS21"/>
</dbReference>
<name>RS21_NITEU</name>
<organism>
    <name type="scientific">Nitrosomonas europaea (strain ATCC 19718 / CIP 103999 / KCTC 2705 / NBRC 14298)</name>
    <dbReference type="NCBI Taxonomy" id="228410"/>
    <lineage>
        <taxon>Bacteria</taxon>
        <taxon>Pseudomonadati</taxon>
        <taxon>Pseudomonadota</taxon>
        <taxon>Betaproteobacteria</taxon>
        <taxon>Nitrosomonadales</taxon>
        <taxon>Nitrosomonadaceae</taxon>
        <taxon>Nitrosomonas</taxon>
    </lineage>
</organism>